<reference key="1">
    <citation type="journal article" date="2005" name="PLoS Biol.">
        <title>The genome sequence of Rickettsia felis identifies the first putative conjugative plasmid in an obligate intracellular parasite.</title>
        <authorList>
            <person name="Ogata H."/>
            <person name="Renesto P."/>
            <person name="Audic S."/>
            <person name="Robert C."/>
            <person name="Blanc G."/>
            <person name="Fournier P.-E."/>
            <person name="Parinello H."/>
            <person name="Claverie J.-M."/>
            <person name="Raoult D."/>
        </authorList>
    </citation>
    <scope>NUCLEOTIDE SEQUENCE [LARGE SCALE GENOMIC DNA]</scope>
    <source>
        <strain>ATCC VR-1525 / URRWXCal2</strain>
    </source>
</reference>
<evidence type="ECO:0000255" key="1">
    <source>
        <dbReference type="HAMAP-Rule" id="MF_01358"/>
    </source>
</evidence>
<organism>
    <name type="scientific">Rickettsia felis (strain ATCC VR-1525 / URRWXCal2)</name>
    <name type="common">Rickettsia azadi</name>
    <dbReference type="NCBI Taxonomy" id="315456"/>
    <lineage>
        <taxon>Bacteria</taxon>
        <taxon>Pseudomonadati</taxon>
        <taxon>Pseudomonadota</taxon>
        <taxon>Alphaproteobacteria</taxon>
        <taxon>Rickettsiales</taxon>
        <taxon>Rickettsiaceae</taxon>
        <taxon>Rickettsieae</taxon>
        <taxon>Rickettsia</taxon>
        <taxon>spotted fever group</taxon>
    </lineage>
</organism>
<name>NUOD_RICFE</name>
<comment type="function">
    <text evidence="1">NDH-1 shuttles electrons from NADH, via FMN and iron-sulfur (Fe-S) centers, to quinones in the respiratory chain. The immediate electron acceptor for the enzyme in this species is believed to be ubiquinone. Couples the redox reaction to proton translocation (for every two electrons transferred, four hydrogen ions are translocated across the cytoplasmic membrane), and thus conserves the redox energy in a proton gradient.</text>
</comment>
<comment type="catalytic activity">
    <reaction evidence="1">
        <text>a quinone + NADH + 5 H(+)(in) = a quinol + NAD(+) + 4 H(+)(out)</text>
        <dbReference type="Rhea" id="RHEA:57888"/>
        <dbReference type="ChEBI" id="CHEBI:15378"/>
        <dbReference type="ChEBI" id="CHEBI:24646"/>
        <dbReference type="ChEBI" id="CHEBI:57540"/>
        <dbReference type="ChEBI" id="CHEBI:57945"/>
        <dbReference type="ChEBI" id="CHEBI:132124"/>
    </reaction>
</comment>
<comment type="subunit">
    <text evidence="1">NDH-1 is composed of 14 different subunits. Subunits NuoB, C, D, E, F, and G constitute the peripheral sector of the complex.</text>
</comment>
<comment type="subcellular location">
    <subcellularLocation>
        <location evidence="1">Cell inner membrane</location>
        <topology evidence="1">Peripheral membrane protein</topology>
        <orientation evidence="1">Cytoplasmic side</orientation>
    </subcellularLocation>
</comment>
<comment type="similarity">
    <text evidence="1">Belongs to the complex I 49 kDa subunit family.</text>
</comment>
<accession>Q4UM08</accession>
<gene>
    <name evidence="1" type="primary">nuoD</name>
    <name type="ordered locus">RF_0564</name>
</gene>
<keyword id="KW-0997">Cell inner membrane</keyword>
<keyword id="KW-1003">Cell membrane</keyword>
<keyword id="KW-0472">Membrane</keyword>
<keyword id="KW-0520">NAD</keyword>
<keyword id="KW-0874">Quinone</keyword>
<keyword id="KW-1278">Translocase</keyword>
<keyword id="KW-0813">Transport</keyword>
<keyword id="KW-0830">Ubiquinone</keyword>
<feature type="chain" id="PRO_0000287864" description="NADH-quinone oxidoreductase subunit D">
    <location>
        <begin position="1"/>
        <end position="391"/>
    </location>
</feature>
<protein>
    <recommendedName>
        <fullName evidence="1">NADH-quinone oxidoreductase subunit D</fullName>
        <ecNumber evidence="1">7.1.1.-</ecNumber>
    </recommendedName>
    <alternativeName>
        <fullName evidence="1">NADH dehydrogenase I subunit D</fullName>
    </alternativeName>
    <alternativeName>
        <fullName evidence="1">NDH-1 subunit D</fullName>
    </alternativeName>
</protein>
<sequence length="391" mass="44640">MTNNTKTITLNLGPQHPATHGVLRLILEMDGEVVNNADPHIGLLHRGTEKLIEHKTYLQAIPYFDRLDYVSPMCQEHAFALAVESLLECEVPRRAQFIRVLFSELTRILNHTLNIGSQALDIGATTPLLWLFEEREKIMEFYERVSGSRMHSNYFRPGGVAEDLPDGLLEDIDKFIEQFPPKLHDIESLLNENRLWKQRLVDIGVVSQKEAMDWGFSGPMLRGSGIAWDLRKSNPYDVYDEIDFKVPIGKNGDCYDRYFVRMLEMYESIKIIKQCIEKMPKGAVKTDDPKLTPPTRAKMKESMEAMIHHFKLYTEGYDVPAGETYKAVEAPKGEFGVYLYSQGGNRPYRCRIKAPGFAHLQGLDFISKGHLMADVITIIATLDIVFGEIDR</sequence>
<proteinExistence type="inferred from homology"/>
<dbReference type="EC" id="7.1.1.-" evidence="1"/>
<dbReference type="EMBL" id="CP000053">
    <property type="protein sequence ID" value="AAY61415.1"/>
    <property type="molecule type" value="Genomic_DNA"/>
</dbReference>
<dbReference type="SMR" id="Q4UM08"/>
<dbReference type="STRING" id="315456.RF_0564"/>
<dbReference type="KEGG" id="rfe:RF_0564"/>
<dbReference type="eggNOG" id="COG0649">
    <property type="taxonomic scope" value="Bacteria"/>
</dbReference>
<dbReference type="HOGENOM" id="CLU_015134_1_2_5"/>
<dbReference type="OrthoDB" id="9801496at2"/>
<dbReference type="Proteomes" id="UP000008548">
    <property type="component" value="Chromosome"/>
</dbReference>
<dbReference type="GO" id="GO:0005886">
    <property type="term" value="C:plasma membrane"/>
    <property type="evidence" value="ECO:0007669"/>
    <property type="project" value="UniProtKB-SubCell"/>
</dbReference>
<dbReference type="GO" id="GO:0051287">
    <property type="term" value="F:NAD binding"/>
    <property type="evidence" value="ECO:0007669"/>
    <property type="project" value="InterPro"/>
</dbReference>
<dbReference type="GO" id="GO:0050136">
    <property type="term" value="F:NADH:ubiquinone reductase (non-electrogenic) activity"/>
    <property type="evidence" value="ECO:0007669"/>
    <property type="project" value="UniProtKB-UniRule"/>
</dbReference>
<dbReference type="GO" id="GO:0048038">
    <property type="term" value="F:quinone binding"/>
    <property type="evidence" value="ECO:0007669"/>
    <property type="project" value="UniProtKB-KW"/>
</dbReference>
<dbReference type="FunFam" id="1.10.645.10:FF:000005">
    <property type="entry name" value="NADH-quinone oxidoreductase subunit D"/>
    <property type="match status" value="1"/>
</dbReference>
<dbReference type="Gene3D" id="1.10.645.10">
    <property type="entry name" value="Cytochrome-c3 Hydrogenase, chain B"/>
    <property type="match status" value="1"/>
</dbReference>
<dbReference type="HAMAP" id="MF_01358">
    <property type="entry name" value="NDH1_NuoD"/>
    <property type="match status" value="1"/>
</dbReference>
<dbReference type="InterPro" id="IPR001135">
    <property type="entry name" value="NADH_Q_OxRdtase_suD"/>
</dbReference>
<dbReference type="InterPro" id="IPR014029">
    <property type="entry name" value="NADH_UbQ_OxRdtase_49kDa_CS"/>
</dbReference>
<dbReference type="InterPro" id="IPR022885">
    <property type="entry name" value="NDH1_su_D/H"/>
</dbReference>
<dbReference type="InterPro" id="IPR029014">
    <property type="entry name" value="NiFe-Hase_large"/>
</dbReference>
<dbReference type="NCBIfam" id="TIGR01962">
    <property type="entry name" value="NuoD"/>
    <property type="match status" value="1"/>
</dbReference>
<dbReference type="NCBIfam" id="NF004739">
    <property type="entry name" value="PRK06075.1"/>
    <property type="match status" value="1"/>
</dbReference>
<dbReference type="PANTHER" id="PTHR11993:SF10">
    <property type="entry name" value="NADH DEHYDROGENASE [UBIQUINONE] IRON-SULFUR PROTEIN 2, MITOCHONDRIAL"/>
    <property type="match status" value="1"/>
</dbReference>
<dbReference type="PANTHER" id="PTHR11993">
    <property type="entry name" value="NADH-UBIQUINONE OXIDOREDUCTASE 49 KDA SUBUNIT"/>
    <property type="match status" value="1"/>
</dbReference>
<dbReference type="Pfam" id="PF00346">
    <property type="entry name" value="Complex1_49kDa"/>
    <property type="match status" value="1"/>
</dbReference>
<dbReference type="SUPFAM" id="SSF56762">
    <property type="entry name" value="HydB/Nqo4-like"/>
    <property type="match status" value="1"/>
</dbReference>
<dbReference type="PROSITE" id="PS00535">
    <property type="entry name" value="COMPLEX1_49K"/>
    <property type="match status" value="1"/>
</dbReference>